<protein>
    <recommendedName>
        <fullName evidence="1">Protein AaeX</fullName>
    </recommendedName>
</protein>
<keyword id="KW-1003">Cell membrane</keyword>
<keyword id="KW-0472">Membrane</keyword>
<keyword id="KW-1185">Reference proteome</keyword>
<keyword id="KW-0812">Transmembrane</keyword>
<keyword id="KW-1133">Transmembrane helix</keyword>
<comment type="subcellular location">
    <subcellularLocation>
        <location evidence="1">Cell membrane</location>
        <topology evidence="1">Multi-pass membrane protein</topology>
    </subcellularLocation>
</comment>
<comment type="similarity">
    <text evidence="1">Belongs to the AaeX family.</text>
</comment>
<gene>
    <name evidence="1" type="primary">aaeX</name>
    <name type="ordered locus">SARI_04267</name>
</gene>
<reference key="1">
    <citation type="submission" date="2007-11" db="EMBL/GenBank/DDBJ databases">
        <authorList>
            <consortium name="The Salmonella enterica serovar Arizonae Genome Sequencing Project"/>
            <person name="McClelland M."/>
            <person name="Sanderson E.K."/>
            <person name="Porwollik S."/>
            <person name="Spieth J."/>
            <person name="Clifton W.S."/>
            <person name="Fulton R."/>
            <person name="Chunyan W."/>
            <person name="Wollam A."/>
            <person name="Shah N."/>
            <person name="Pepin K."/>
            <person name="Bhonagiri V."/>
            <person name="Nash W."/>
            <person name="Johnson M."/>
            <person name="Thiruvilangam P."/>
            <person name="Wilson R."/>
        </authorList>
    </citation>
    <scope>NUCLEOTIDE SEQUENCE [LARGE SCALE GENOMIC DNA]</scope>
    <source>
        <strain>ATCC BAA-731 / CDC346-86 / RSK2980</strain>
    </source>
</reference>
<name>AAEX_SALAR</name>
<organism>
    <name type="scientific">Salmonella arizonae (strain ATCC BAA-731 / CDC346-86 / RSK2980)</name>
    <dbReference type="NCBI Taxonomy" id="41514"/>
    <lineage>
        <taxon>Bacteria</taxon>
        <taxon>Pseudomonadati</taxon>
        <taxon>Pseudomonadota</taxon>
        <taxon>Gammaproteobacteria</taxon>
        <taxon>Enterobacterales</taxon>
        <taxon>Enterobacteriaceae</taxon>
        <taxon>Salmonella</taxon>
    </lineage>
</organism>
<evidence type="ECO:0000255" key="1">
    <source>
        <dbReference type="HAMAP-Rule" id="MF_01546"/>
    </source>
</evidence>
<dbReference type="EMBL" id="CP000880">
    <property type="protein sequence ID" value="ABX24050.1"/>
    <property type="molecule type" value="Genomic_DNA"/>
</dbReference>
<dbReference type="STRING" id="41514.SARI_04267"/>
<dbReference type="KEGG" id="ses:SARI_04267"/>
<dbReference type="HOGENOM" id="CLU_188292_0_0_6"/>
<dbReference type="Proteomes" id="UP000002084">
    <property type="component" value="Chromosome"/>
</dbReference>
<dbReference type="GO" id="GO:0005886">
    <property type="term" value="C:plasma membrane"/>
    <property type="evidence" value="ECO:0007669"/>
    <property type="project" value="UniProtKB-SubCell"/>
</dbReference>
<dbReference type="HAMAP" id="MF_01546">
    <property type="entry name" value="AaeX"/>
    <property type="match status" value="1"/>
</dbReference>
<dbReference type="InterPro" id="IPR012451">
    <property type="entry name" value="DUF1656"/>
</dbReference>
<dbReference type="NCBIfam" id="NF008615">
    <property type="entry name" value="PRK11594.1"/>
    <property type="match status" value="1"/>
</dbReference>
<dbReference type="Pfam" id="PF07869">
    <property type="entry name" value="DUF1656"/>
    <property type="match status" value="1"/>
</dbReference>
<accession>A9MNW8</accession>
<proteinExistence type="inferred from homology"/>
<sequence length="67" mass="7847">MSLFPVIVVFGLSFPPIFFELLLSLAIFWLVRRVLVPTGIYDFVWHPALFNTALYCCLFYLISRLFV</sequence>
<feature type="chain" id="PRO_1000087668" description="Protein AaeX">
    <location>
        <begin position="1"/>
        <end position="67"/>
    </location>
</feature>
<feature type="transmembrane region" description="Helical" evidence="1">
    <location>
        <begin position="3"/>
        <end position="23"/>
    </location>
</feature>
<feature type="transmembrane region" description="Helical" evidence="1">
    <location>
        <begin position="43"/>
        <end position="63"/>
    </location>
</feature>